<dbReference type="EC" id="3.2.1.39"/>
<dbReference type="EMBL" id="AF249675">
    <property type="protein sequence ID" value="AAK58515.1"/>
    <property type="molecule type" value="mRNA"/>
</dbReference>
<dbReference type="PDB" id="2JON">
    <property type="method" value="NMR"/>
    <property type="chains" value="A=360-460"/>
</dbReference>
<dbReference type="PDBsum" id="2JON"/>
<dbReference type="BMRB" id="Q94G86"/>
<dbReference type="SMR" id="Q94G86"/>
<dbReference type="Allergome" id="3391">
    <property type="allergen name" value="Ole e 9.0101"/>
</dbReference>
<dbReference type="Allergome" id="497">
    <property type="allergen name" value="Ole e 9"/>
</dbReference>
<dbReference type="CAZy" id="CBM43">
    <property type="family name" value="Carbohydrate-Binding Module Family 43"/>
</dbReference>
<dbReference type="CAZy" id="GH17">
    <property type="family name" value="Glycoside Hydrolase Family 17"/>
</dbReference>
<dbReference type="GlyCosmos" id="Q94G86">
    <property type="glycosylation" value="2 sites, No reported glycans"/>
</dbReference>
<dbReference type="EvolutionaryTrace" id="Q94G86"/>
<dbReference type="GO" id="GO:0005576">
    <property type="term" value="C:extracellular region"/>
    <property type="evidence" value="ECO:0007669"/>
    <property type="project" value="UniProtKB-SubCell"/>
</dbReference>
<dbReference type="GO" id="GO:0042973">
    <property type="term" value="F:glucan endo-1,3-beta-D-glucosidase activity"/>
    <property type="evidence" value="ECO:0000314"/>
    <property type="project" value="UniProtKB"/>
</dbReference>
<dbReference type="GO" id="GO:0042803">
    <property type="term" value="F:protein homodimerization activity"/>
    <property type="evidence" value="ECO:0000314"/>
    <property type="project" value="UniProtKB"/>
</dbReference>
<dbReference type="GO" id="GO:0006076">
    <property type="term" value="P:(1-&gt;3)-beta-D-glucan catabolic process"/>
    <property type="evidence" value="ECO:0000314"/>
    <property type="project" value="UniProtKB"/>
</dbReference>
<dbReference type="FunFam" id="3.20.20.80:FF:000005">
    <property type="entry name" value="Glucan endo-1,3-beta-glucosidase 14"/>
    <property type="match status" value="1"/>
</dbReference>
<dbReference type="FunFam" id="1.20.58.1040:FF:000003">
    <property type="entry name" value="glucan endo-1,3-beta-glucosidase 7"/>
    <property type="match status" value="1"/>
</dbReference>
<dbReference type="Gene3D" id="1.20.58.1040">
    <property type="match status" value="1"/>
</dbReference>
<dbReference type="Gene3D" id="3.20.20.80">
    <property type="entry name" value="Glycosidases"/>
    <property type="match status" value="1"/>
</dbReference>
<dbReference type="InterPro" id="IPR000490">
    <property type="entry name" value="Glyco_hydro_17"/>
</dbReference>
<dbReference type="InterPro" id="IPR044965">
    <property type="entry name" value="Glyco_hydro_17_plant"/>
</dbReference>
<dbReference type="InterPro" id="IPR017853">
    <property type="entry name" value="Glycoside_hydrolase_SF"/>
</dbReference>
<dbReference type="InterPro" id="IPR012946">
    <property type="entry name" value="X8"/>
</dbReference>
<dbReference type="PANTHER" id="PTHR32227">
    <property type="entry name" value="GLUCAN ENDO-1,3-BETA-GLUCOSIDASE BG1-RELATED-RELATED"/>
    <property type="match status" value="1"/>
</dbReference>
<dbReference type="Pfam" id="PF00332">
    <property type="entry name" value="Glyco_hydro_17"/>
    <property type="match status" value="1"/>
</dbReference>
<dbReference type="Pfam" id="PF07983">
    <property type="entry name" value="X8"/>
    <property type="match status" value="1"/>
</dbReference>
<dbReference type="SMART" id="SM00768">
    <property type="entry name" value="X8"/>
    <property type="match status" value="1"/>
</dbReference>
<dbReference type="SUPFAM" id="SSF51445">
    <property type="entry name" value="(Trans)glycosidases"/>
    <property type="match status" value="1"/>
</dbReference>
<accession>Q94G86</accession>
<protein>
    <recommendedName>
        <fullName>Glucan endo-1,3-beta-D-glucosidase</fullName>
        <ecNumber>3.2.1.39</ecNumber>
    </recommendedName>
    <alternativeName>
        <fullName>Major pollen allergen Ole e 9</fullName>
    </alternativeName>
    <allergenName>Ole e 9</allergenName>
</protein>
<keyword id="KW-0002">3D-structure</keyword>
<keyword id="KW-0020">Allergen</keyword>
<keyword id="KW-0903">Direct protein sequencing</keyword>
<keyword id="KW-1015">Disulfide bond</keyword>
<keyword id="KW-0325">Glycoprotein</keyword>
<keyword id="KW-0326">Glycosidase</keyword>
<keyword id="KW-0378">Hydrolase</keyword>
<keyword id="KW-0964">Secreted</keyword>
<keyword id="KW-0732">Signal</keyword>
<evidence type="ECO:0000250" key="1">
    <source>
        <dbReference type="UniProtKB" id="O22317"/>
    </source>
</evidence>
<evidence type="ECO:0000255" key="2"/>
<evidence type="ECO:0000256" key="3">
    <source>
        <dbReference type="SAM" id="MobiDB-lite"/>
    </source>
</evidence>
<evidence type="ECO:0000269" key="4">
    <source>
    </source>
</evidence>
<evidence type="ECO:0000269" key="5">
    <source>
    </source>
</evidence>
<evidence type="ECO:0000269" key="6">
    <source>
    </source>
</evidence>
<evidence type="ECO:0000269" key="7">
    <source>
    </source>
</evidence>
<evidence type="ECO:0000305" key="8"/>
<evidence type="ECO:0000305" key="9">
    <source>
    </source>
</evidence>
<evidence type="ECO:0007829" key="10">
    <source>
        <dbReference type="PDB" id="2JON"/>
    </source>
</evidence>
<sequence length="460" mass="48838">MAANVQTSSLLFLVFLLLQNFYSANSQSFLGVNYGQLSDNLPSLQATVNLLKSTTIQKVRLFGAEPAVIKAFANTGVEIVIGFDNGDIPTLASNPNVASQFVKSNVMSFYPASNIIAITVGNEVLTSGDQKLISQLLPAMQNVQNALNAASLGGKVKVSTVHAMAVLSQSYPPSSGVFNPGLGDTMKALLQFQSANDAPFMISPYPYFAYKNQPTPDTLAFCLFQPNAGQVDSGNGHKYTNMFDAQVDAVHSALNAMGFKDIEIVVAETGWPHGGDSNEVGPSLDNAKAYVGNLINHLKSKVGTPLMPGKSIDTYLFSLYDEDKKTGASSEKYFGLFKPDGSTTYDVGLLKNTQNPTTPATPTPTPKAAGSWCVPKPGVSDDQLTGNINYACGQGIDCGPIQPGGACFEPNTVKAHAAYVMNLYYQSAGRNSWNCDFSQTATLTNTNPSYGACNFPSGSN</sequence>
<organism>
    <name type="scientific">Olea europaea</name>
    <name type="common">Common olive</name>
    <dbReference type="NCBI Taxonomy" id="4146"/>
    <lineage>
        <taxon>Eukaryota</taxon>
        <taxon>Viridiplantae</taxon>
        <taxon>Streptophyta</taxon>
        <taxon>Embryophyta</taxon>
        <taxon>Tracheophyta</taxon>
        <taxon>Spermatophyta</taxon>
        <taxon>Magnoliopsida</taxon>
        <taxon>eudicotyledons</taxon>
        <taxon>Gunneridae</taxon>
        <taxon>Pentapetalae</taxon>
        <taxon>asterids</taxon>
        <taxon>lamiids</taxon>
        <taxon>Lamiales</taxon>
        <taxon>Oleaceae</taxon>
        <taxon>Oleeae</taxon>
        <taxon>Olea</taxon>
    </lineage>
</organism>
<proteinExistence type="evidence at protein level"/>
<reference key="1">
    <citation type="journal article" date="2001" name="J. Biol. Chem.">
        <title>Ole e 9, a major olive pollen allergen is a 1,3-beta-glucanase. Isolation, characterization, amino acid sequence, and tissue specificity.</title>
        <authorList>
            <person name="Huecas S."/>
            <person name="Villalba M."/>
            <person name="Rodriguez R."/>
        </authorList>
    </citation>
    <scope>NUCLEOTIDE SEQUENCE [MRNA]</scope>
    <scope>PROTEIN SEQUENCE OF 158-177; 261-270; 289-299; 311-320; 333-340; 352-361 AND 368-395</scope>
    <scope>FUNCTION</scope>
    <scope>CATALYTIC ACTIVITY</scope>
    <scope>BIOPHYSICOCHEMICAL PROPERTIES</scope>
    <scope>TISSUE SPECIFICITY</scope>
    <scope>SUBUNIT</scope>
    <scope>GLYCOSYLATION</scope>
</reference>
<reference key="2">
    <citation type="journal article" date="2003" name="Biochem. J.">
        <title>The C-terminal segment of the 1,3-beta-glucanase Ole e 9 from olive (Olea europaea) pollen is an independent domain with allergenic activity: expression in Pichia pastoris and characterization.</title>
        <authorList>
            <person name="Palomares O."/>
            <person name="Villalba M."/>
            <person name="Rodriguez R."/>
        </authorList>
    </citation>
    <scope>DISULFIDE BOND</scope>
    <scope>GLYCOSYLATION</scope>
    <scope>ALLERGEN</scope>
</reference>
<reference key="3">
    <citation type="journal article" date="2005" name="Clin. Exp. Allergy">
        <title>1,3-beta-glucanases as candidates in latex-pollen-vegetable food cross-reactivity.</title>
        <authorList>
            <person name="Palomares O."/>
            <person name="Villalba M."/>
            <person name="Quiralte J."/>
            <person name="Polo F."/>
            <person name="Rodriguez R."/>
        </authorList>
    </citation>
    <scope>FUNCTION</scope>
    <scope>ALLERGEN</scope>
</reference>
<reference key="4">
    <citation type="journal article" date="2007" name="Biomed. Pharmacother.">
        <title>Emerging pollen allergens.</title>
        <authorList>
            <person name="Rodriguez R."/>
            <person name="Villalba M."/>
            <person name="Batanero E."/>
            <person name="Palomares O."/>
            <person name="Salamanca G."/>
        </authorList>
    </citation>
    <scope>LAMINARIN-BINDING</scope>
</reference>
<reference key="5">
    <citation type="journal article" date="2012" name="Talanta">
        <title>Analysis of olive allergens.</title>
        <authorList>
            <person name="Esteve C."/>
            <person name="Montealegre C."/>
            <person name="Marina M.L."/>
            <person name="Garcia M.C."/>
        </authorList>
    </citation>
    <scope>REVIEW</scope>
    <scope>NOMENCLATURE</scope>
</reference>
<reference key="6">
    <citation type="journal article" date="2008" name="Protein Sci.">
        <title>Solution structure of the C-terminal domain of Ole e 9, a major allergen of olive pollen.</title>
        <authorList>
            <person name="Trevino M.A."/>
            <person name="Palomares O."/>
            <person name="Castrillo I."/>
            <person name="Villalba M."/>
            <person name="Rodriguez R."/>
            <person name="Rico M."/>
            <person name="Santoro J."/>
            <person name="Bruix M."/>
        </authorList>
    </citation>
    <scope>STRUCTURE BY NMR OF 360-460</scope>
    <scope>DISULFIDE BOND</scope>
</reference>
<comment type="catalytic activity">
    <reaction evidence="4">
        <text>Hydrolysis of (1-&gt;3)-beta-D-glucosidic linkages in (1-&gt;3)-beta-D-glucans.</text>
        <dbReference type="EC" id="3.2.1.39"/>
    </reaction>
</comment>
<comment type="biophysicochemical properties">
    <phDependence>
        <text evidence="4">Optimum pH is 4.5-6.0.</text>
    </phDependence>
</comment>
<comment type="subunit">
    <text evidence="4">Homodimer.</text>
</comment>
<comment type="subcellular location">
    <subcellularLocation>
        <location evidence="8">Secreted</location>
    </subcellularLocation>
</comment>
<comment type="tissue specificity">
    <text evidence="4">Expressed only in pollen.</text>
</comment>
<comment type="domain">
    <text>The N-terminal region (1-350) contains the enzymatic activity while the C-terminal region (360-460) can bind laminarin. Both regions are allergenic by themselves.</text>
</comment>
<comment type="PTM">
    <text evidence="4 5">Glycosylated.</text>
</comment>
<comment type="PTM">
    <text>Contains two additional disulfide bonds, but it is unclear if they are between the pairs Cys-392-Cys-398 and Cys-407-Cys-453 (PudMed:18096638) or between the pairs Cys-392-Cys-453 and Cys-398-Cys-407 (PudMed:12392450).</text>
</comment>
<comment type="allergen">
    <text evidence="5 6">Causes an allergic reaction in human. Major allergen from olive pollen. Important in Mediterranean countries.</text>
</comment>
<comment type="similarity">
    <text evidence="8">Belongs to the glycosyl hydrolase 17 family.</text>
</comment>
<comment type="caution">
    <text evidence="9">The sequences determined for the two internal peptides of Ole e 4 are identical to internal fragments of Ole e 9. However, the apparent molecular weight of the two proteins is different and they are still classified as two separate allergens (PubMed:22385802), even though we may be facing two different isoforms of the same allergen.</text>
</comment>
<name>ALL9_OLEEU</name>
<gene>
    <name type="primary">OLE9</name>
</gene>
<feature type="signal peptide" evidence="2">
    <location>
        <begin position="1"/>
        <end position="26"/>
    </location>
</feature>
<feature type="chain" id="PRO_0000421081" description="Glucan endo-1,3-beta-D-glucosidase">
    <location>
        <begin position="27"/>
        <end position="460"/>
    </location>
</feature>
<feature type="region of interest" description="Disordered" evidence="3">
    <location>
        <begin position="352"/>
        <end position="371"/>
    </location>
</feature>
<feature type="active site" description="Proton donor" evidence="1">
    <location>
        <position position="123"/>
    </location>
</feature>
<feature type="active site" description="Nucleophile" evidence="1">
    <location>
        <position position="268"/>
    </location>
</feature>
<feature type="glycosylation site" description="N-linked (GlcNAc...) asparagine" evidence="2">
    <location>
        <position position="355"/>
    </location>
</feature>
<feature type="glycosylation site" description="N-linked (GlcNAc...) asparagine" evidence="2">
    <location>
        <position position="447"/>
    </location>
</feature>
<feature type="disulfide bond" evidence="5 7">
    <location>
        <begin position="373"/>
        <end position="435"/>
    </location>
</feature>
<feature type="strand" evidence="10">
    <location>
        <begin position="372"/>
        <end position="375"/>
    </location>
</feature>
<feature type="helix" evidence="10">
    <location>
        <begin position="381"/>
        <end position="391"/>
    </location>
</feature>
<feature type="turn" evidence="10">
    <location>
        <begin position="392"/>
        <end position="394"/>
    </location>
</feature>
<feature type="strand" evidence="10">
    <location>
        <begin position="395"/>
        <end position="399"/>
    </location>
</feature>
<feature type="strand" evidence="10">
    <location>
        <begin position="405"/>
        <end position="407"/>
    </location>
</feature>
<feature type="helix" evidence="10">
    <location>
        <begin position="415"/>
        <end position="428"/>
    </location>
</feature>
<feature type="helix" evidence="10">
    <location>
        <begin position="432"/>
        <end position="434"/>
    </location>
</feature>
<feature type="strand" evidence="10">
    <location>
        <begin position="439"/>
        <end position="446"/>
    </location>
</feature>
<feature type="strand" evidence="10">
    <location>
        <begin position="451"/>
        <end position="453"/>
    </location>
</feature>